<reference key="1">
    <citation type="journal article" date="2010" name="PLoS Genet.">
        <title>Genome sequence of the plant growth promoting endophytic bacterium Enterobacter sp. 638.</title>
        <authorList>
            <person name="Taghavi S."/>
            <person name="van der Lelie D."/>
            <person name="Hoffman A."/>
            <person name="Zhang Y.B."/>
            <person name="Walla M.D."/>
            <person name="Vangronsveld J."/>
            <person name="Newman L."/>
            <person name="Monchy S."/>
        </authorList>
    </citation>
    <scope>NUCLEOTIDE SEQUENCE [LARGE SCALE GENOMIC DNA]</scope>
    <source>
        <strain>638</strain>
    </source>
</reference>
<dbReference type="EMBL" id="CP000653">
    <property type="protein sequence ID" value="ABP62415.1"/>
    <property type="molecule type" value="Genomic_DNA"/>
</dbReference>
<dbReference type="RefSeq" id="WP_000246815.1">
    <property type="nucleotide sequence ID" value="NC_009436.1"/>
</dbReference>
<dbReference type="SMR" id="A4WFD5"/>
<dbReference type="STRING" id="399742.Ent638_3759"/>
<dbReference type="GeneID" id="98390450"/>
<dbReference type="KEGG" id="ent:Ent638_3759"/>
<dbReference type="eggNOG" id="COG0048">
    <property type="taxonomic scope" value="Bacteria"/>
</dbReference>
<dbReference type="HOGENOM" id="CLU_104295_1_2_6"/>
<dbReference type="OrthoDB" id="9802366at2"/>
<dbReference type="Proteomes" id="UP000000230">
    <property type="component" value="Chromosome"/>
</dbReference>
<dbReference type="GO" id="GO:0015935">
    <property type="term" value="C:small ribosomal subunit"/>
    <property type="evidence" value="ECO:0007669"/>
    <property type="project" value="InterPro"/>
</dbReference>
<dbReference type="GO" id="GO:0019843">
    <property type="term" value="F:rRNA binding"/>
    <property type="evidence" value="ECO:0007669"/>
    <property type="project" value="UniProtKB-UniRule"/>
</dbReference>
<dbReference type="GO" id="GO:0003735">
    <property type="term" value="F:structural constituent of ribosome"/>
    <property type="evidence" value="ECO:0007669"/>
    <property type="project" value="InterPro"/>
</dbReference>
<dbReference type="GO" id="GO:0000049">
    <property type="term" value="F:tRNA binding"/>
    <property type="evidence" value="ECO:0007669"/>
    <property type="project" value="UniProtKB-UniRule"/>
</dbReference>
<dbReference type="GO" id="GO:0006412">
    <property type="term" value="P:translation"/>
    <property type="evidence" value="ECO:0007669"/>
    <property type="project" value="UniProtKB-UniRule"/>
</dbReference>
<dbReference type="CDD" id="cd03368">
    <property type="entry name" value="Ribosomal_S12"/>
    <property type="match status" value="1"/>
</dbReference>
<dbReference type="FunFam" id="2.40.50.140:FF:000001">
    <property type="entry name" value="30S ribosomal protein S12"/>
    <property type="match status" value="1"/>
</dbReference>
<dbReference type="Gene3D" id="2.40.50.140">
    <property type="entry name" value="Nucleic acid-binding proteins"/>
    <property type="match status" value="1"/>
</dbReference>
<dbReference type="HAMAP" id="MF_00403_B">
    <property type="entry name" value="Ribosomal_uS12_B"/>
    <property type="match status" value="1"/>
</dbReference>
<dbReference type="InterPro" id="IPR012340">
    <property type="entry name" value="NA-bd_OB-fold"/>
</dbReference>
<dbReference type="InterPro" id="IPR006032">
    <property type="entry name" value="Ribosomal_uS12"/>
</dbReference>
<dbReference type="InterPro" id="IPR005679">
    <property type="entry name" value="Ribosomal_uS12_bac"/>
</dbReference>
<dbReference type="NCBIfam" id="TIGR00981">
    <property type="entry name" value="rpsL_bact"/>
    <property type="match status" value="1"/>
</dbReference>
<dbReference type="PANTHER" id="PTHR11652">
    <property type="entry name" value="30S RIBOSOMAL PROTEIN S12 FAMILY MEMBER"/>
    <property type="match status" value="1"/>
</dbReference>
<dbReference type="Pfam" id="PF00164">
    <property type="entry name" value="Ribosom_S12_S23"/>
    <property type="match status" value="1"/>
</dbReference>
<dbReference type="PIRSF" id="PIRSF002133">
    <property type="entry name" value="Ribosomal_S12/S23"/>
    <property type="match status" value="1"/>
</dbReference>
<dbReference type="PRINTS" id="PR01034">
    <property type="entry name" value="RIBOSOMALS12"/>
</dbReference>
<dbReference type="SUPFAM" id="SSF50249">
    <property type="entry name" value="Nucleic acid-binding proteins"/>
    <property type="match status" value="1"/>
</dbReference>
<dbReference type="PROSITE" id="PS00055">
    <property type="entry name" value="RIBOSOMAL_S12"/>
    <property type="match status" value="1"/>
</dbReference>
<comment type="function">
    <text evidence="2">With S4 and S5 plays an important role in translational accuracy.</text>
</comment>
<comment type="function">
    <text evidence="2">Interacts with and stabilizes bases of the 16S rRNA that are involved in tRNA selection in the A site and with the mRNA backbone. Located at the interface of the 30S and 50S subunits, it traverses the body of the 30S subunit contacting proteins on the other side and probably holding the rRNA structure together. The combined cluster of proteins S8, S12 and S17 appears to hold together the shoulder and platform of the 30S subunit.</text>
</comment>
<comment type="subunit">
    <text evidence="2">Part of the 30S ribosomal subunit. Contacts proteins S8 and S17. May interact with IF1 in the 30S initiation complex.</text>
</comment>
<comment type="similarity">
    <text evidence="2">Belongs to the universal ribosomal protein uS12 family.</text>
</comment>
<proteinExistence type="inferred from homology"/>
<accession>A4WFD5</accession>
<gene>
    <name evidence="2" type="primary">rpsL</name>
    <name type="ordered locus">Ent638_3759</name>
</gene>
<evidence type="ECO:0000250" key="1"/>
<evidence type="ECO:0000255" key="2">
    <source>
        <dbReference type="HAMAP-Rule" id="MF_00403"/>
    </source>
</evidence>
<evidence type="ECO:0000305" key="3"/>
<protein>
    <recommendedName>
        <fullName evidence="2">Small ribosomal subunit protein uS12</fullName>
    </recommendedName>
    <alternativeName>
        <fullName evidence="3">30S ribosomal protein S12</fullName>
    </alternativeName>
</protein>
<keyword id="KW-0488">Methylation</keyword>
<keyword id="KW-0687">Ribonucleoprotein</keyword>
<keyword id="KW-0689">Ribosomal protein</keyword>
<keyword id="KW-0694">RNA-binding</keyword>
<keyword id="KW-0699">rRNA-binding</keyword>
<keyword id="KW-0820">tRNA-binding</keyword>
<sequence length="124" mass="13737">MATVNQLVRKPRARKVAKSNVPALEACPQKRGVCTRVYTTTPKKPNSALRKVCRVRLTNGFEVTSYIGGEGHNLQEHSVILIRGGRVKDLPGVRYHTVRGALDCSGVKDRKQARSKYGVKRPKA</sequence>
<feature type="chain" id="PRO_1000060815" description="Small ribosomal subunit protein uS12">
    <location>
        <begin position="1"/>
        <end position="124"/>
    </location>
</feature>
<feature type="modified residue" description="3-methylthioaspartic acid" evidence="1">
    <location>
        <position position="89"/>
    </location>
</feature>
<name>RS12_ENT38</name>
<organism>
    <name type="scientific">Enterobacter sp. (strain 638)</name>
    <dbReference type="NCBI Taxonomy" id="399742"/>
    <lineage>
        <taxon>Bacteria</taxon>
        <taxon>Pseudomonadati</taxon>
        <taxon>Pseudomonadota</taxon>
        <taxon>Gammaproteobacteria</taxon>
        <taxon>Enterobacterales</taxon>
        <taxon>Enterobacteriaceae</taxon>
        <taxon>Enterobacter</taxon>
    </lineage>
</organism>